<dbReference type="EC" id="3.6.-.-" evidence="1"/>
<dbReference type="EMBL" id="CP000685">
    <property type="protein sequence ID" value="ABQ05729.1"/>
    <property type="molecule type" value="Genomic_DNA"/>
</dbReference>
<dbReference type="RefSeq" id="WP_012024768.1">
    <property type="nucleotide sequence ID" value="NC_009441.1"/>
</dbReference>
<dbReference type="SMR" id="A5FGE0"/>
<dbReference type="STRING" id="376686.Fjoh_2707"/>
<dbReference type="KEGG" id="fjo:Fjoh_2707"/>
<dbReference type="eggNOG" id="COG0486">
    <property type="taxonomic scope" value="Bacteria"/>
</dbReference>
<dbReference type="HOGENOM" id="CLU_019624_4_1_10"/>
<dbReference type="OrthoDB" id="9805918at2"/>
<dbReference type="Proteomes" id="UP000006694">
    <property type="component" value="Chromosome"/>
</dbReference>
<dbReference type="GO" id="GO:0005829">
    <property type="term" value="C:cytosol"/>
    <property type="evidence" value="ECO:0007669"/>
    <property type="project" value="TreeGrafter"/>
</dbReference>
<dbReference type="GO" id="GO:0005525">
    <property type="term" value="F:GTP binding"/>
    <property type="evidence" value="ECO:0007669"/>
    <property type="project" value="UniProtKB-UniRule"/>
</dbReference>
<dbReference type="GO" id="GO:0003924">
    <property type="term" value="F:GTPase activity"/>
    <property type="evidence" value="ECO:0007669"/>
    <property type="project" value="UniProtKB-UniRule"/>
</dbReference>
<dbReference type="GO" id="GO:0046872">
    <property type="term" value="F:metal ion binding"/>
    <property type="evidence" value="ECO:0007669"/>
    <property type="project" value="UniProtKB-KW"/>
</dbReference>
<dbReference type="GO" id="GO:0030488">
    <property type="term" value="P:tRNA methylation"/>
    <property type="evidence" value="ECO:0007669"/>
    <property type="project" value="TreeGrafter"/>
</dbReference>
<dbReference type="GO" id="GO:0002098">
    <property type="term" value="P:tRNA wobble uridine modification"/>
    <property type="evidence" value="ECO:0007669"/>
    <property type="project" value="TreeGrafter"/>
</dbReference>
<dbReference type="CDD" id="cd04164">
    <property type="entry name" value="trmE"/>
    <property type="match status" value="1"/>
</dbReference>
<dbReference type="CDD" id="cd14858">
    <property type="entry name" value="TrmE_N"/>
    <property type="match status" value="1"/>
</dbReference>
<dbReference type="FunFam" id="3.30.1360.120:FF:000003">
    <property type="entry name" value="tRNA modification GTPase MnmE"/>
    <property type="match status" value="1"/>
</dbReference>
<dbReference type="FunFam" id="3.40.50.300:FF:001376">
    <property type="entry name" value="tRNA modification GTPase MnmE"/>
    <property type="match status" value="1"/>
</dbReference>
<dbReference type="Gene3D" id="3.40.50.300">
    <property type="entry name" value="P-loop containing nucleotide triphosphate hydrolases"/>
    <property type="match status" value="1"/>
</dbReference>
<dbReference type="Gene3D" id="3.30.1360.120">
    <property type="entry name" value="Probable tRNA modification gtpase trme, domain 1"/>
    <property type="match status" value="1"/>
</dbReference>
<dbReference type="Gene3D" id="1.20.120.430">
    <property type="entry name" value="tRNA modification GTPase MnmE domain 2"/>
    <property type="match status" value="1"/>
</dbReference>
<dbReference type="HAMAP" id="MF_00379">
    <property type="entry name" value="GTPase_MnmE"/>
    <property type="match status" value="1"/>
</dbReference>
<dbReference type="InterPro" id="IPR031168">
    <property type="entry name" value="G_TrmE"/>
</dbReference>
<dbReference type="InterPro" id="IPR006073">
    <property type="entry name" value="GTP-bd"/>
</dbReference>
<dbReference type="InterPro" id="IPR018948">
    <property type="entry name" value="GTP-bd_TrmE_N"/>
</dbReference>
<dbReference type="InterPro" id="IPR004520">
    <property type="entry name" value="GTPase_MnmE"/>
</dbReference>
<dbReference type="InterPro" id="IPR027368">
    <property type="entry name" value="MnmE_dom2"/>
</dbReference>
<dbReference type="InterPro" id="IPR025867">
    <property type="entry name" value="MnmE_helical"/>
</dbReference>
<dbReference type="InterPro" id="IPR027417">
    <property type="entry name" value="P-loop_NTPase"/>
</dbReference>
<dbReference type="InterPro" id="IPR005225">
    <property type="entry name" value="Small_GTP-bd"/>
</dbReference>
<dbReference type="InterPro" id="IPR027266">
    <property type="entry name" value="TrmE/GcvT_dom1"/>
</dbReference>
<dbReference type="NCBIfam" id="TIGR00450">
    <property type="entry name" value="mnmE_trmE_thdF"/>
    <property type="match status" value="1"/>
</dbReference>
<dbReference type="NCBIfam" id="NF003661">
    <property type="entry name" value="PRK05291.1-3"/>
    <property type="match status" value="1"/>
</dbReference>
<dbReference type="NCBIfam" id="TIGR00231">
    <property type="entry name" value="small_GTP"/>
    <property type="match status" value="1"/>
</dbReference>
<dbReference type="PANTHER" id="PTHR42714">
    <property type="entry name" value="TRNA MODIFICATION GTPASE GTPBP3"/>
    <property type="match status" value="1"/>
</dbReference>
<dbReference type="PANTHER" id="PTHR42714:SF2">
    <property type="entry name" value="TRNA MODIFICATION GTPASE GTPBP3, MITOCHONDRIAL"/>
    <property type="match status" value="1"/>
</dbReference>
<dbReference type="Pfam" id="PF01926">
    <property type="entry name" value="MMR_HSR1"/>
    <property type="match status" value="1"/>
</dbReference>
<dbReference type="Pfam" id="PF12631">
    <property type="entry name" value="MnmE_helical"/>
    <property type="match status" value="1"/>
</dbReference>
<dbReference type="Pfam" id="PF10396">
    <property type="entry name" value="TrmE_N"/>
    <property type="match status" value="1"/>
</dbReference>
<dbReference type="PRINTS" id="PR00449">
    <property type="entry name" value="RASTRNSFRMNG"/>
</dbReference>
<dbReference type="SUPFAM" id="SSF52540">
    <property type="entry name" value="P-loop containing nucleoside triphosphate hydrolases"/>
    <property type="match status" value="1"/>
</dbReference>
<dbReference type="PROSITE" id="PS51709">
    <property type="entry name" value="G_TRME"/>
    <property type="match status" value="1"/>
</dbReference>
<reference key="1">
    <citation type="journal article" date="2009" name="Appl. Environ. Microbiol.">
        <title>Novel features of the polysaccharide-digesting gliding bacterium Flavobacterium johnsoniae as revealed by genome sequence analysis.</title>
        <authorList>
            <person name="McBride M.J."/>
            <person name="Xie G."/>
            <person name="Martens E.C."/>
            <person name="Lapidus A."/>
            <person name="Henrissat B."/>
            <person name="Rhodes R.G."/>
            <person name="Goltsman E."/>
            <person name="Wang W."/>
            <person name="Xu J."/>
            <person name="Hunnicutt D.W."/>
            <person name="Staroscik A.M."/>
            <person name="Hoover T.R."/>
            <person name="Cheng Y.Q."/>
            <person name="Stein J.L."/>
        </authorList>
    </citation>
    <scope>NUCLEOTIDE SEQUENCE [LARGE SCALE GENOMIC DNA]</scope>
    <source>
        <strain>ATCC 17061 / DSM 2064 / JCM 8514 / BCRC 14874 / CCUG 350202 / NBRC 14942 / NCIMB 11054 / UW101</strain>
    </source>
</reference>
<organism>
    <name type="scientific">Flavobacterium johnsoniae (strain ATCC 17061 / DSM 2064 / JCM 8514 / BCRC 14874 / CCUG 350202 / NBRC 14942 / NCIMB 11054 / UW101)</name>
    <name type="common">Cytophaga johnsonae</name>
    <dbReference type="NCBI Taxonomy" id="376686"/>
    <lineage>
        <taxon>Bacteria</taxon>
        <taxon>Pseudomonadati</taxon>
        <taxon>Bacteroidota</taxon>
        <taxon>Flavobacteriia</taxon>
        <taxon>Flavobacteriales</taxon>
        <taxon>Flavobacteriaceae</taxon>
        <taxon>Flavobacterium</taxon>
    </lineage>
</organism>
<feature type="chain" id="PRO_0000345787" description="tRNA modification GTPase MnmE">
    <location>
        <begin position="1"/>
        <end position="466"/>
    </location>
</feature>
<feature type="domain" description="TrmE-type G">
    <location>
        <begin position="221"/>
        <end position="388"/>
    </location>
</feature>
<feature type="binding site" evidence="1">
    <location>
        <position position="23"/>
    </location>
    <ligand>
        <name>(6S)-5-formyl-5,6,7,8-tetrahydrofolate</name>
        <dbReference type="ChEBI" id="CHEBI:57457"/>
    </ligand>
</feature>
<feature type="binding site" evidence="1">
    <location>
        <position position="86"/>
    </location>
    <ligand>
        <name>(6S)-5-formyl-5,6,7,8-tetrahydrofolate</name>
        <dbReference type="ChEBI" id="CHEBI:57457"/>
    </ligand>
</feature>
<feature type="binding site" evidence="1">
    <location>
        <position position="125"/>
    </location>
    <ligand>
        <name>(6S)-5-formyl-5,6,7,8-tetrahydrofolate</name>
        <dbReference type="ChEBI" id="CHEBI:57457"/>
    </ligand>
</feature>
<feature type="binding site" evidence="1">
    <location>
        <begin position="231"/>
        <end position="236"/>
    </location>
    <ligand>
        <name>GTP</name>
        <dbReference type="ChEBI" id="CHEBI:37565"/>
    </ligand>
</feature>
<feature type="binding site" evidence="1">
    <location>
        <position position="231"/>
    </location>
    <ligand>
        <name>K(+)</name>
        <dbReference type="ChEBI" id="CHEBI:29103"/>
    </ligand>
</feature>
<feature type="binding site" evidence="1">
    <location>
        <position position="235"/>
    </location>
    <ligand>
        <name>Mg(2+)</name>
        <dbReference type="ChEBI" id="CHEBI:18420"/>
    </ligand>
</feature>
<feature type="binding site" evidence="1">
    <location>
        <begin position="250"/>
        <end position="256"/>
    </location>
    <ligand>
        <name>GTP</name>
        <dbReference type="ChEBI" id="CHEBI:37565"/>
    </ligand>
</feature>
<feature type="binding site" evidence="1">
    <location>
        <position position="250"/>
    </location>
    <ligand>
        <name>K(+)</name>
        <dbReference type="ChEBI" id="CHEBI:29103"/>
    </ligand>
</feature>
<feature type="binding site" evidence="1">
    <location>
        <position position="252"/>
    </location>
    <ligand>
        <name>K(+)</name>
        <dbReference type="ChEBI" id="CHEBI:29103"/>
    </ligand>
</feature>
<feature type="binding site" evidence="1">
    <location>
        <position position="255"/>
    </location>
    <ligand>
        <name>K(+)</name>
        <dbReference type="ChEBI" id="CHEBI:29103"/>
    </ligand>
</feature>
<feature type="binding site" evidence="1">
    <location>
        <position position="256"/>
    </location>
    <ligand>
        <name>Mg(2+)</name>
        <dbReference type="ChEBI" id="CHEBI:18420"/>
    </ligand>
</feature>
<feature type="binding site" evidence="1">
    <location>
        <begin position="275"/>
        <end position="278"/>
    </location>
    <ligand>
        <name>GTP</name>
        <dbReference type="ChEBI" id="CHEBI:37565"/>
    </ligand>
</feature>
<feature type="binding site" evidence="1">
    <location>
        <position position="466"/>
    </location>
    <ligand>
        <name>(6S)-5-formyl-5,6,7,8-tetrahydrofolate</name>
        <dbReference type="ChEBI" id="CHEBI:57457"/>
    </ligand>
</feature>
<protein>
    <recommendedName>
        <fullName evidence="1">tRNA modification GTPase MnmE</fullName>
        <ecNumber evidence="1">3.6.-.-</ecNumber>
    </recommendedName>
</protein>
<evidence type="ECO:0000255" key="1">
    <source>
        <dbReference type="HAMAP-Rule" id="MF_00379"/>
    </source>
</evidence>
<name>MNME_FLAJ1</name>
<keyword id="KW-0963">Cytoplasm</keyword>
<keyword id="KW-0342">GTP-binding</keyword>
<keyword id="KW-0378">Hydrolase</keyword>
<keyword id="KW-0460">Magnesium</keyword>
<keyword id="KW-0479">Metal-binding</keyword>
<keyword id="KW-0547">Nucleotide-binding</keyword>
<keyword id="KW-0630">Potassium</keyword>
<keyword id="KW-0819">tRNA processing</keyword>
<gene>
    <name evidence="1" type="primary">mnmE</name>
    <name evidence="1" type="synonym">trmE</name>
    <name type="ordered locus">Fjoh_2707</name>
</gene>
<accession>A5FGE0</accession>
<sequence length="466" mass="51305">MINQDSIVALATPSGAGAIAVIRISGAEAVSIGNSVFKSIKNKDLTKQKTHTLHLGHIVDNGKTLDEVLVSVFKGPNSYTGEDTIEISCHGSTYIQQQIIQLLLRKGCRMADAGEFTLRAFLNGKLDLSQAEAVADLISSDNEASHHIAMQQMRGGFSNEIAKLREELLNFASLIELELDFAEEDVEFADRTQFHELLNRIEFVLKRLIDSFAVGNVIKNGIPVAIVGEPNVGKSTLLNALLNEERAIVSDIAGTTRDTIEDELVIGGIGFRFIDTAGIRETKDVVESIGIKKTFEKIDQAQVVIYLFDGLKFKASSSEFVSEIEQIKNKYPLKPLLIVVNKKDILSEDEVLNITQKLENLNAKLLLISAKQKIGVEELKNELLSFVNTGALRNNETIVTNTRHYDSLLKALDEIQKVKFGLETNLSSDLIALDIKEALYQFGLITGQVSNDELLGNIFANFCIGK</sequence>
<proteinExistence type="inferred from homology"/>
<comment type="function">
    <text evidence="1">Exhibits a very high intrinsic GTPase hydrolysis rate. Involved in the addition of a carboxymethylaminomethyl (cmnm) group at the wobble position (U34) of certain tRNAs, forming tRNA-cmnm(5)s(2)U34.</text>
</comment>
<comment type="cofactor">
    <cofactor evidence="1">
        <name>K(+)</name>
        <dbReference type="ChEBI" id="CHEBI:29103"/>
    </cofactor>
    <text evidence="1">Binds 1 potassium ion per subunit.</text>
</comment>
<comment type="subunit">
    <text evidence="1">Homodimer. Heterotetramer of two MnmE and two MnmG subunits.</text>
</comment>
<comment type="subcellular location">
    <subcellularLocation>
        <location evidence="1">Cytoplasm</location>
    </subcellularLocation>
</comment>
<comment type="similarity">
    <text evidence="1">Belongs to the TRAFAC class TrmE-Era-EngA-EngB-Septin-like GTPase superfamily. TrmE GTPase family.</text>
</comment>